<proteinExistence type="inferred from homology"/>
<sequence length="319" mass="35856">MNPGRGGAYAAGRDGTRGTRRPHGLSHLDLLESESVHIFREVAGEFERPVILFSGGKDSIVMLHLALKSFAPAPVPFALLHVDTGHNFPEVIAYRDRVVAALGLRLEVASVQDFIDNGTLRERPDGTRNPLQTVPLLDAIGRHRFDAVFGGGRRDEEKARAKERVFSLRDEFGGWDPRRQRPELWRLYNGRHAPGEHVRVFPLSNWTELDVWQYVAREEIELPTIYYAHEREVFRRGGMWLAPGEWGGPREGEAVEKRRVRYRTVGDMSCTGAVDSAAATVADVVAEIATSRLTERGATRADDKLSEAAMEDRKREGYF</sequence>
<evidence type="ECO:0000256" key="1">
    <source>
        <dbReference type="SAM" id="MobiDB-lite"/>
    </source>
</evidence>
<evidence type="ECO:0000305" key="2"/>
<dbReference type="EC" id="2.7.7.4"/>
<dbReference type="EMBL" id="AF127374">
    <property type="protein sequence ID" value="AAD32746.1"/>
    <property type="molecule type" value="Genomic_DNA"/>
</dbReference>
<dbReference type="SMR" id="Q9X5U0"/>
<dbReference type="UniPathway" id="UPA00851"/>
<dbReference type="GO" id="GO:0005524">
    <property type="term" value="F:ATP binding"/>
    <property type="evidence" value="ECO:0007669"/>
    <property type="project" value="UniProtKB-KW"/>
</dbReference>
<dbReference type="GO" id="GO:0004781">
    <property type="term" value="F:sulfate adenylyltransferase (ATP) activity"/>
    <property type="evidence" value="ECO:0007669"/>
    <property type="project" value="UniProtKB-UniRule"/>
</dbReference>
<dbReference type="GO" id="GO:0017000">
    <property type="term" value="P:antibiotic biosynthetic process"/>
    <property type="evidence" value="ECO:0007669"/>
    <property type="project" value="UniProtKB-KW"/>
</dbReference>
<dbReference type="GO" id="GO:0070814">
    <property type="term" value="P:hydrogen sulfide biosynthetic process"/>
    <property type="evidence" value="ECO:0007669"/>
    <property type="project" value="UniProtKB-UniRule"/>
</dbReference>
<dbReference type="GO" id="GO:0000103">
    <property type="term" value="P:sulfate assimilation"/>
    <property type="evidence" value="ECO:0007669"/>
    <property type="project" value="UniProtKB-UniRule"/>
</dbReference>
<dbReference type="Gene3D" id="3.40.50.620">
    <property type="entry name" value="HUPs"/>
    <property type="match status" value="1"/>
</dbReference>
<dbReference type="HAMAP" id="MF_00064">
    <property type="entry name" value="Sulf_adenylyltr_sub2"/>
    <property type="match status" value="1"/>
</dbReference>
<dbReference type="InterPro" id="IPR002500">
    <property type="entry name" value="PAPS_reduct_dom"/>
</dbReference>
<dbReference type="InterPro" id="IPR014729">
    <property type="entry name" value="Rossmann-like_a/b/a_fold"/>
</dbReference>
<dbReference type="InterPro" id="IPR011784">
    <property type="entry name" value="SO4_adenylTrfase_ssu"/>
</dbReference>
<dbReference type="InterPro" id="IPR050128">
    <property type="entry name" value="Sulfate_adenylyltrnsfr_sub2"/>
</dbReference>
<dbReference type="NCBIfam" id="TIGR02039">
    <property type="entry name" value="CysD"/>
    <property type="match status" value="1"/>
</dbReference>
<dbReference type="NCBIfam" id="NF003587">
    <property type="entry name" value="PRK05253.1"/>
    <property type="match status" value="1"/>
</dbReference>
<dbReference type="NCBIfam" id="NF009214">
    <property type="entry name" value="PRK12563.1"/>
    <property type="match status" value="1"/>
</dbReference>
<dbReference type="PANTHER" id="PTHR43196">
    <property type="entry name" value="SULFATE ADENYLYLTRANSFERASE SUBUNIT 2"/>
    <property type="match status" value="1"/>
</dbReference>
<dbReference type="PANTHER" id="PTHR43196:SF1">
    <property type="entry name" value="SULFATE ADENYLYLTRANSFERASE SUBUNIT 2"/>
    <property type="match status" value="1"/>
</dbReference>
<dbReference type="Pfam" id="PF01507">
    <property type="entry name" value="PAPS_reduct"/>
    <property type="match status" value="1"/>
</dbReference>
<dbReference type="PIRSF" id="PIRSF002936">
    <property type="entry name" value="CysDAde_trans"/>
    <property type="match status" value="1"/>
</dbReference>
<dbReference type="SUPFAM" id="SSF52402">
    <property type="entry name" value="Adenine nucleotide alpha hydrolases-like"/>
    <property type="match status" value="1"/>
</dbReference>
<protein>
    <recommendedName>
        <fullName>Sulfate adenylyltransferase subunit 2</fullName>
        <ecNumber>2.7.7.4</ecNumber>
    </recommendedName>
    <alternativeName>
        <fullName>ATP-sulfurylase small subunit</fullName>
    </alternativeName>
    <alternativeName>
        <fullName>Mitomycin biosynthesis protein V</fullName>
    </alternativeName>
    <alternativeName>
        <fullName>Sulfate adenylate transferase</fullName>
        <shortName>SAT</shortName>
    </alternativeName>
</protein>
<reference key="1">
    <citation type="journal article" date="1999" name="Chem. Biol.">
        <title>Molecular characterization and analysis of the biosynthetic gene cluster for the antitumor antibiotic mitomycin C from Streptomyces lavendulae NRRL 2564.</title>
        <authorList>
            <person name="Mao Y.Q."/>
            <person name="Varoglu M."/>
            <person name="Sherman D.H."/>
        </authorList>
    </citation>
    <scope>NUCLEOTIDE SEQUENCE [GENOMIC DNA]</scope>
    <source>
        <strain>NRRL 2564</strain>
    </source>
</reference>
<comment type="function">
    <text>With CysN forms the ATP sulfurylase (ATPS) that catalyzes the adenylation of sulfate producing adenosine 5'-phosphosulfate (APS) and diphosphate, the first enzymatic step in sulfur assimilation pathway. APS synthesis involves the formation of a high-energy phosphoric-sulfuric acid anhydride bond driven by GTP hydrolysis by CysN coupled to ATP hydrolysis by CysD.</text>
</comment>
<comment type="catalytic activity">
    <reaction>
        <text>sulfate + ATP + H(+) = adenosine 5'-phosphosulfate + diphosphate</text>
        <dbReference type="Rhea" id="RHEA:18133"/>
        <dbReference type="ChEBI" id="CHEBI:15378"/>
        <dbReference type="ChEBI" id="CHEBI:16189"/>
        <dbReference type="ChEBI" id="CHEBI:30616"/>
        <dbReference type="ChEBI" id="CHEBI:33019"/>
        <dbReference type="ChEBI" id="CHEBI:58243"/>
        <dbReference type="EC" id="2.7.7.4"/>
    </reaction>
</comment>
<comment type="pathway">
    <text>Antibiotic biosynthesis; mitomycin C biosynthesis.</text>
</comment>
<comment type="similarity">
    <text evidence="2">Belongs to the PAPS reductase family. CysD subfamily.</text>
</comment>
<keyword id="KW-0045">Antibiotic biosynthesis</keyword>
<keyword id="KW-0067">ATP-binding</keyword>
<keyword id="KW-0547">Nucleotide-binding</keyword>
<keyword id="KW-0548">Nucleotidyltransferase</keyword>
<keyword id="KW-0808">Transferase</keyword>
<accession>Q9X5U0</accession>
<gene>
    <name type="primary">mmcV</name>
</gene>
<organism>
    <name type="scientific">Streptomyces lavendulae</name>
    <dbReference type="NCBI Taxonomy" id="1914"/>
    <lineage>
        <taxon>Bacteria</taxon>
        <taxon>Bacillati</taxon>
        <taxon>Actinomycetota</taxon>
        <taxon>Actinomycetes</taxon>
        <taxon>Kitasatosporales</taxon>
        <taxon>Streptomycetaceae</taxon>
        <taxon>Streptomyces</taxon>
    </lineage>
</organism>
<name>MMCV_STRLA</name>
<feature type="chain" id="PRO_0000100689" description="Sulfate adenylyltransferase subunit 2">
    <location>
        <begin position="1"/>
        <end position="319"/>
    </location>
</feature>
<feature type="region of interest" description="Disordered" evidence="1">
    <location>
        <begin position="1"/>
        <end position="22"/>
    </location>
</feature>
<feature type="region of interest" description="Disordered" evidence="1">
    <location>
        <begin position="296"/>
        <end position="319"/>
    </location>
</feature>